<proteinExistence type="inferred from homology"/>
<evidence type="ECO:0000250" key="1"/>
<evidence type="ECO:0000255" key="2"/>
<evidence type="ECO:0000256" key="3">
    <source>
        <dbReference type="SAM" id="MobiDB-lite"/>
    </source>
</evidence>
<evidence type="ECO:0000269" key="4">
    <source>
    </source>
</evidence>
<evidence type="ECO:0000305" key="5"/>
<name>PILQ_NEIGO</name>
<accession>P35819</accession>
<accession>Q50972</accession>
<reference key="1">
    <citation type="journal article" date="1989" name="Infect. Immun.">
        <title>Cloning and DNA sequence of the omc gene encoding the outer membrane protein-macromolecular complex from Neisseria gonorrhoeae.</title>
        <authorList>
            <person name="Tsai W.M."/>
            <person name="Larsen S.H."/>
            <person name="Wilde C.E."/>
        </authorList>
    </citation>
    <scope>NUCLEOTIDE SEQUENCE [GENOMIC DNA]</scope>
    <source>
        <strain>2686</strain>
    </source>
</reference>
<reference key="2">
    <citation type="journal article" date="1995" name="Mol. Microbiol.">
        <title>The product of the pilQ gene is essential for the biogenesis of type IV pili in Neisseria gonorrhoeae.</title>
        <authorList>
            <person name="Drake S.L."/>
            <person name="Koomey M."/>
        </authorList>
    </citation>
    <scope>NUCLEOTIDE SEQUENCE [GENOMIC DNA]</scope>
    <scope>FUNCTION</scope>
    <source>
        <strain>MS11</strain>
    </source>
</reference>
<keyword id="KW-0998">Cell outer membrane</keyword>
<keyword id="KW-0178">Competence</keyword>
<keyword id="KW-0472">Membrane</keyword>
<keyword id="KW-0653">Protein transport</keyword>
<keyword id="KW-0732">Signal</keyword>
<keyword id="KW-0813">Transport</keyword>
<sequence>MNTKLTKIISGLFVATAAFQTASAGNITDIKVSSLPNKQKIVKVSFDKEIVNPTGFVTSSPARIALDFEQTGISMDQQVLEYADPLLSKISAAQNSSRARLVLNLNKPGQYNTEVRGNKVWIFINESDDTVSAPARPAVKAAPAAPAKQQAAAPFTESVVSVSAPFSPAKQQAAASAKQQAATPAKQTNIDFRKDGKNAGIIELAALGFAGQPDISQQHDHIIVTLKNHTLPTALQRSLDVADFKTPVQKVTLKRLNNDTQLIITTTGNWELVNKSAAPGYFTFQVLPKKQNLESGGVNNAPKTFTGRKISLDFQDVEIRTILQILAKESGMNIVASDSVSGKMTLSLKDVPWDQALDLVMQARNLDMRQQGNIVNMAPRRAACQRQSLLTSGKRHCRSGRAVFPKLPIEIQKCGRIPQHPALDNADTTGNRNTLVSGRGSVLIDPATNTLIVTDTRSVIEKFRKLIDELDVPAQQVMIEARIVEAADGFSRDLGVKFGATGRKKLKNETSAFGWGVNSGFGGGDKWEAKPKSTCRLPCRKQHFAGARDFSGALNLELSASESLSKTKTLANPRVLTQNRKEAKIESGYEIPFTVTTRSGGGNSTNTELKKAVLGLTVTANITPDGQIIMTVKINKDSPRQCASGNNTILCISTKSLNTQAMVENGGTLIVGGIYEENNGNTLTKVPLLATSPLSATSLKHSGKNRPPRTADFQLPPREL</sequence>
<dbReference type="EMBL" id="L19944">
    <property type="protein sequence ID" value="AAA25456.1"/>
    <property type="status" value="ALT_FRAME"/>
    <property type="molecule type" value="Genomic_DNA"/>
</dbReference>
<dbReference type="EMBL" id="U40596">
    <property type="protein sequence ID" value="AAC43603.1"/>
    <property type="molecule type" value="Genomic_DNA"/>
</dbReference>
<dbReference type="PIR" id="A37051">
    <property type="entry name" value="A37051"/>
</dbReference>
<dbReference type="PIR" id="S70838">
    <property type="entry name" value="S70838"/>
</dbReference>
<dbReference type="BMRB" id="P35819"/>
<dbReference type="SMR" id="P35819"/>
<dbReference type="GO" id="GO:0009279">
    <property type="term" value="C:cell outer membrane"/>
    <property type="evidence" value="ECO:0007669"/>
    <property type="project" value="UniProtKB-SubCell"/>
</dbReference>
<dbReference type="GO" id="GO:0030420">
    <property type="term" value="P:establishment of competence for transformation"/>
    <property type="evidence" value="ECO:0007669"/>
    <property type="project" value="UniProtKB-KW"/>
</dbReference>
<dbReference type="GO" id="GO:0009306">
    <property type="term" value="P:protein secretion"/>
    <property type="evidence" value="ECO:0007669"/>
    <property type="project" value="InterPro"/>
</dbReference>
<dbReference type="Gene3D" id="2.60.40.3470">
    <property type="match status" value="1"/>
</dbReference>
<dbReference type="Gene3D" id="2.60.40.3500">
    <property type="match status" value="1"/>
</dbReference>
<dbReference type="Gene3D" id="3.30.1370.120">
    <property type="match status" value="1"/>
</dbReference>
<dbReference type="Gene3D" id="3.30.1370.130">
    <property type="match status" value="1"/>
</dbReference>
<dbReference type="InterPro" id="IPR021731">
    <property type="entry name" value="AMIN_dom"/>
</dbReference>
<dbReference type="InterPro" id="IPR001775">
    <property type="entry name" value="GspD/PilQ"/>
</dbReference>
<dbReference type="InterPro" id="IPR005644">
    <property type="entry name" value="NolW-like"/>
</dbReference>
<dbReference type="InterPro" id="IPR038591">
    <property type="entry name" value="NolW-like_sf"/>
</dbReference>
<dbReference type="InterPro" id="IPR013355">
    <property type="entry name" value="Pilus_4_PilQ"/>
</dbReference>
<dbReference type="InterPro" id="IPR011662">
    <property type="entry name" value="Secretin/TonB_short_N"/>
</dbReference>
<dbReference type="InterPro" id="IPR004846">
    <property type="entry name" value="T2SS/T3SS_dom"/>
</dbReference>
<dbReference type="InterPro" id="IPR004845">
    <property type="entry name" value="T2SS_GspD_CS"/>
</dbReference>
<dbReference type="InterPro" id="IPR051808">
    <property type="entry name" value="Type_IV_pilus_biogenesis"/>
</dbReference>
<dbReference type="NCBIfam" id="TIGR02515">
    <property type="entry name" value="IV_pilus_PilQ"/>
    <property type="match status" value="1"/>
</dbReference>
<dbReference type="PANTHER" id="PTHR30604:SF1">
    <property type="entry name" value="DNA UTILIZATION PROTEIN HOFQ"/>
    <property type="match status" value="1"/>
</dbReference>
<dbReference type="PANTHER" id="PTHR30604">
    <property type="entry name" value="PROTEIN TRANSPORT PROTEIN HOFQ"/>
    <property type="match status" value="1"/>
</dbReference>
<dbReference type="Pfam" id="PF11741">
    <property type="entry name" value="AMIN"/>
    <property type="match status" value="2"/>
</dbReference>
<dbReference type="Pfam" id="PF00263">
    <property type="entry name" value="Secretin"/>
    <property type="match status" value="1"/>
</dbReference>
<dbReference type="Pfam" id="PF03958">
    <property type="entry name" value="Secretin_N"/>
    <property type="match status" value="1"/>
</dbReference>
<dbReference type="PRINTS" id="PR00811">
    <property type="entry name" value="BCTERIALGSPD"/>
</dbReference>
<dbReference type="SMART" id="SM00965">
    <property type="entry name" value="STN"/>
    <property type="match status" value="1"/>
</dbReference>
<dbReference type="PROSITE" id="PS00875">
    <property type="entry name" value="T2SP_D"/>
    <property type="match status" value="1"/>
</dbReference>
<gene>
    <name type="primary">pilQ</name>
    <name type="synonym">omc</name>
</gene>
<protein>
    <recommendedName>
        <fullName>Type IV pilus biogenesis and competence protein PilQ</fullName>
    </recommendedName>
    <alternativeName>
        <fullName>Outer membrane protein Omc</fullName>
    </alternativeName>
</protein>
<feature type="signal peptide" evidence="2">
    <location>
        <begin position="1"/>
        <end position="24"/>
    </location>
</feature>
<feature type="chain" id="PRO_0000013115" description="Type IV pilus biogenesis and competence protein PilQ">
    <location>
        <begin position="25"/>
        <end position="720"/>
    </location>
</feature>
<feature type="region of interest" description="Disordered" evidence="3">
    <location>
        <begin position="697"/>
        <end position="720"/>
    </location>
</feature>
<organism>
    <name type="scientific">Neisseria gonorrhoeae</name>
    <dbReference type="NCBI Taxonomy" id="485"/>
    <lineage>
        <taxon>Bacteria</taxon>
        <taxon>Pseudomonadati</taxon>
        <taxon>Pseudomonadota</taxon>
        <taxon>Betaproteobacteria</taxon>
        <taxon>Neisseriales</taxon>
        <taxon>Neisseriaceae</taxon>
        <taxon>Neisseria</taxon>
    </lineage>
</organism>
<comment type="function">
    <text evidence="4">Required for type IV pilus biogenesis and competence. Could function as a pore for exit of the pilus but also as a channel for entry of heme and antimicrobial agents and uptake of transforming DNA.</text>
</comment>
<comment type="subunit">
    <text evidence="1">Homododecamer. Tetramer of trimer (By similarity).</text>
</comment>
<comment type="subcellular location">
    <subcellularLocation>
        <location>Cell outer membrane</location>
    </subcellularLocation>
    <text>Associated with the membrane through its C-terminus.</text>
</comment>
<comment type="similarity">
    <text evidence="5">Belongs to the bacterial secretin family. PilQ subfamily.</text>
</comment>
<comment type="sequence caution" evidence="5">
    <conflict type="frameshift">
        <sequence resource="EMBL-CDS" id="AAA25456"/>
    </conflict>
</comment>